<organism>
    <name type="scientific">Bacillus subtilis (strain 168)</name>
    <dbReference type="NCBI Taxonomy" id="224308"/>
    <lineage>
        <taxon>Bacteria</taxon>
        <taxon>Bacillati</taxon>
        <taxon>Bacillota</taxon>
        <taxon>Bacilli</taxon>
        <taxon>Bacillales</taxon>
        <taxon>Bacillaceae</taxon>
        <taxon>Bacillus</taxon>
    </lineage>
</organism>
<dbReference type="EMBL" id="AL009126">
    <property type="protein sequence ID" value="CAB14040.1"/>
    <property type="molecule type" value="Genomic_DNA"/>
</dbReference>
<dbReference type="RefSeq" id="NP_390005.1">
    <property type="nucleotide sequence ID" value="NC_000964.3"/>
</dbReference>
<dbReference type="RefSeq" id="WP_004399252.1">
    <property type="nucleotide sequence ID" value="NZ_OZ025638.1"/>
</dbReference>
<dbReference type="SMR" id="O31963"/>
<dbReference type="FunCoup" id="O31963">
    <property type="interactions" value="51"/>
</dbReference>
<dbReference type="STRING" id="224308.BSU21220"/>
<dbReference type="PaxDb" id="224308-BSU21220"/>
<dbReference type="EnsemblBacteria" id="CAB14040">
    <property type="protein sequence ID" value="CAB14040"/>
    <property type="gene ID" value="BSU_21220"/>
</dbReference>
<dbReference type="GeneID" id="939146"/>
<dbReference type="KEGG" id="bsu:BSU21220"/>
<dbReference type="PATRIC" id="fig|224308.179.peg.2316"/>
<dbReference type="eggNOG" id="ENOG5032RES">
    <property type="taxonomic scope" value="Bacteria"/>
</dbReference>
<dbReference type="InParanoid" id="O31963"/>
<dbReference type="OrthoDB" id="2402258at2"/>
<dbReference type="BioCyc" id="BSUB:BSU21220-MONOMER"/>
<dbReference type="Proteomes" id="UP000001570">
    <property type="component" value="Chromosome"/>
</dbReference>
<protein>
    <recommendedName>
        <fullName>SPbeta prophage-derived uncharacterized protein YomU</fullName>
    </recommendedName>
</protein>
<keyword id="KW-1185">Reference proteome</keyword>
<sequence length="265" mass="29050">MAKQTVIHEVGKITAKRLSDNKVIASGVTQMTQFSQQVQQDFLKGGWGNRDLYVINSSKEVSGNVRNAFFDLDFMAMQQGVKIENETISVWEDESLTVSDTGTVILSYLPLSKVSLTNEDGDQIEVDAASKTVTVPDTFATKGEALAVHYQIEVEAETVEINGEKFSENYYFEIHTIEYDPKTSKIYSDLYIQLPKVNFSGEADMSFEAGNAYTPEIGYRALADNNGKIGNFARVKRKADGTKGVVTSDEGTGSSQSSDLGGTTE</sequence>
<accession>O31963</accession>
<evidence type="ECO:0000256" key="1">
    <source>
        <dbReference type="SAM" id="MobiDB-lite"/>
    </source>
</evidence>
<reference key="1">
    <citation type="journal article" date="1997" name="Nature">
        <title>The complete genome sequence of the Gram-positive bacterium Bacillus subtilis.</title>
        <authorList>
            <person name="Kunst F."/>
            <person name="Ogasawara N."/>
            <person name="Moszer I."/>
            <person name="Albertini A.M."/>
            <person name="Alloni G."/>
            <person name="Azevedo V."/>
            <person name="Bertero M.G."/>
            <person name="Bessieres P."/>
            <person name="Bolotin A."/>
            <person name="Borchert S."/>
            <person name="Borriss R."/>
            <person name="Boursier L."/>
            <person name="Brans A."/>
            <person name="Braun M."/>
            <person name="Brignell S.C."/>
            <person name="Bron S."/>
            <person name="Brouillet S."/>
            <person name="Bruschi C.V."/>
            <person name="Caldwell B."/>
            <person name="Capuano V."/>
            <person name="Carter N.M."/>
            <person name="Choi S.-K."/>
            <person name="Codani J.-J."/>
            <person name="Connerton I.F."/>
            <person name="Cummings N.J."/>
            <person name="Daniel R.A."/>
            <person name="Denizot F."/>
            <person name="Devine K.M."/>
            <person name="Duesterhoeft A."/>
            <person name="Ehrlich S.D."/>
            <person name="Emmerson P.T."/>
            <person name="Entian K.-D."/>
            <person name="Errington J."/>
            <person name="Fabret C."/>
            <person name="Ferrari E."/>
            <person name="Foulger D."/>
            <person name="Fritz C."/>
            <person name="Fujita M."/>
            <person name="Fujita Y."/>
            <person name="Fuma S."/>
            <person name="Galizzi A."/>
            <person name="Galleron N."/>
            <person name="Ghim S.-Y."/>
            <person name="Glaser P."/>
            <person name="Goffeau A."/>
            <person name="Golightly E.J."/>
            <person name="Grandi G."/>
            <person name="Guiseppi G."/>
            <person name="Guy B.J."/>
            <person name="Haga K."/>
            <person name="Haiech J."/>
            <person name="Harwood C.R."/>
            <person name="Henaut A."/>
            <person name="Hilbert H."/>
            <person name="Holsappel S."/>
            <person name="Hosono S."/>
            <person name="Hullo M.-F."/>
            <person name="Itaya M."/>
            <person name="Jones L.-M."/>
            <person name="Joris B."/>
            <person name="Karamata D."/>
            <person name="Kasahara Y."/>
            <person name="Klaerr-Blanchard M."/>
            <person name="Klein C."/>
            <person name="Kobayashi Y."/>
            <person name="Koetter P."/>
            <person name="Koningstein G."/>
            <person name="Krogh S."/>
            <person name="Kumano M."/>
            <person name="Kurita K."/>
            <person name="Lapidus A."/>
            <person name="Lardinois S."/>
            <person name="Lauber J."/>
            <person name="Lazarevic V."/>
            <person name="Lee S.-M."/>
            <person name="Levine A."/>
            <person name="Liu H."/>
            <person name="Masuda S."/>
            <person name="Mauel C."/>
            <person name="Medigue C."/>
            <person name="Medina N."/>
            <person name="Mellado R.P."/>
            <person name="Mizuno M."/>
            <person name="Moestl D."/>
            <person name="Nakai S."/>
            <person name="Noback M."/>
            <person name="Noone D."/>
            <person name="O'Reilly M."/>
            <person name="Ogawa K."/>
            <person name="Ogiwara A."/>
            <person name="Oudega B."/>
            <person name="Park S.-H."/>
            <person name="Parro V."/>
            <person name="Pohl T.M."/>
            <person name="Portetelle D."/>
            <person name="Porwollik S."/>
            <person name="Prescott A.M."/>
            <person name="Presecan E."/>
            <person name="Pujic P."/>
            <person name="Purnelle B."/>
            <person name="Rapoport G."/>
            <person name="Rey M."/>
            <person name="Reynolds S."/>
            <person name="Rieger M."/>
            <person name="Rivolta C."/>
            <person name="Rocha E."/>
            <person name="Roche B."/>
            <person name="Rose M."/>
            <person name="Sadaie Y."/>
            <person name="Sato T."/>
            <person name="Scanlan E."/>
            <person name="Schleich S."/>
            <person name="Schroeter R."/>
            <person name="Scoffone F."/>
            <person name="Sekiguchi J."/>
            <person name="Sekowska A."/>
            <person name="Seror S.J."/>
            <person name="Serror P."/>
            <person name="Shin B.-S."/>
            <person name="Soldo B."/>
            <person name="Sorokin A."/>
            <person name="Tacconi E."/>
            <person name="Takagi T."/>
            <person name="Takahashi H."/>
            <person name="Takemaru K."/>
            <person name="Takeuchi M."/>
            <person name="Tamakoshi A."/>
            <person name="Tanaka T."/>
            <person name="Terpstra P."/>
            <person name="Tognoni A."/>
            <person name="Tosato V."/>
            <person name="Uchiyama S."/>
            <person name="Vandenbol M."/>
            <person name="Vannier F."/>
            <person name="Vassarotti A."/>
            <person name="Viari A."/>
            <person name="Wambutt R."/>
            <person name="Wedler E."/>
            <person name="Wedler H."/>
            <person name="Weitzenegger T."/>
            <person name="Winters P."/>
            <person name="Wipat A."/>
            <person name="Yamamoto H."/>
            <person name="Yamane K."/>
            <person name="Yasumoto K."/>
            <person name="Yata K."/>
            <person name="Yoshida K."/>
            <person name="Yoshikawa H.-F."/>
            <person name="Zumstein E."/>
            <person name="Yoshikawa H."/>
            <person name="Danchin A."/>
        </authorList>
    </citation>
    <scope>NUCLEOTIDE SEQUENCE [LARGE SCALE GENOMIC DNA]</scope>
    <source>
        <strain>168</strain>
    </source>
</reference>
<gene>
    <name type="primary">yomU</name>
    <name type="ordered locus">BSU21220</name>
</gene>
<proteinExistence type="predicted"/>
<name>YOMU_BACSU</name>
<feature type="chain" id="PRO_0000360599" description="SPbeta prophage-derived uncharacterized protein YomU">
    <location>
        <begin position="1"/>
        <end position="265"/>
    </location>
</feature>
<feature type="region of interest" description="Disordered" evidence="1">
    <location>
        <begin position="238"/>
        <end position="265"/>
    </location>
</feature>
<feature type="compositionally biased region" description="Polar residues" evidence="1">
    <location>
        <begin position="249"/>
        <end position="265"/>
    </location>
</feature>